<accession>B5XLC6</accession>
<keyword id="KW-1003">Cell membrane</keyword>
<keyword id="KW-0342">GTP-binding</keyword>
<keyword id="KW-0378">Hydrolase</keyword>
<keyword id="KW-0472">Membrane</keyword>
<keyword id="KW-0547">Nucleotide-binding</keyword>
<keyword id="KW-0648">Protein biosynthesis</keyword>
<name>LEPA_STRPZ</name>
<proteinExistence type="inferred from homology"/>
<protein>
    <recommendedName>
        <fullName evidence="1">Elongation factor 4</fullName>
        <shortName evidence="1">EF-4</shortName>
        <ecNumber evidence="1">3.6.5.n1</ecNumber>
    </recommendedName>
    <alternativeName>
        <fullName evidence="1">Ribosomal back-translocase LepA</fullName>
    </alternativeName>
</protein>
<comment type="function">
    <text evidence="1">Required for accurate and efficient protein synthesis under certain stress conditions. May act as a fidelity factor of the translation reaction, by catalyzing a one-codon backward translocation of tRNAs on improperly translocated ribosomes. Back-translocation proceeds from a post-translocation (POST) complex to a pre-translocation (PRE) complex, thus giving elongation factor G a second chance to translocate the tRNAs correctly. Binds to ribosomes in a GTP-dependent manner.</text>
</comment>
<comment type="catalytic activity">
    <reaction evidence="1">
        <text>GTP + H2O = GDP + phosphate + H(+)</text>
        <dbReference type="Rhea" id="RHEA:19669"/>
        <dbReference type="ChEBI" id="CHEBI:15377"/>
        <dbReference type="ChEBI" id="CHEBI:15378"/>
        <dbReference type="ChEBI" id="CHEBI:37565"/>
        <dbReference type="ChEBI" id="CHEBI:43474"/>
        <dbReference type="ChEBI" id="CHEBI:58189"/>
        <dbReference type="EC" id="3.6.5.n1"/>
    </reaction>
</comment>
<comment type="subcellular location">
    <subcellularLocation>
        <location evidence="1">Cell membrane</location>
        <topology evidence="1">Peripheral membrane protein</topology>
        <orientation evidence="1">Cytoplasmic side</orientation>
    </subcellularLocation>
</comment>
<comment type="similarity">
    <text evidence="1">Belongs to the TRAFAC class translation factor GTPase superfamily. Classic translation factor GTPase family. LepA subfamily.</text>
</comment>
<dbReference type="EC" id="3.6.5.n1" evidence="1"/>
<dbReference type="EMBL" id="CP000829">
    <property type="protein sequence ID" value="ACI61138.1"/>
    <property type="molecule type" value="Genomic_DNA"/>
</dbReference>
<dbReference type="SMR" id="B5XLC6"/>
<dbReference type="KEGG" id="soz:Spy49_0829"/>
<dbReference type="HOGENOM" id="CLU_009995_3_3_9"/>
<dbReference type="Proteomes" id="UP000001039">
    <property type="component" value="Chromosome"/>
</dbReference>
<dbReference type="GO" id="GO:0005886">
    <property type="term" value="C:plasma membrane"/>
    <property type="evidence" value="ECO:0007669"/>
    <property type="project" value="UniProtKB-SubCell"/>
</dbReference>
<dbReference type="GO" id="GO:0005525">
    <property type="term" value="F:GTP binding"/>
    <property type="evidence" value="ECO:0007669"/>
    <property type="project" value="UniProtKB-UniRule"/>
</dbReference>
<dbReference type="GO" id="GO:0003924">
    <property type="term" value="F:GTPase activity"/>
    <property type="evidence" value="ECO:0007669"/>
    <property type="project" value="UniProtKB-UniRule"/>
</dbReference>
<dbReference type="GO" id="GO:0043022">
    <property type="term" value="F:ribosome binding"/>
    <property type="evidence" value="ECO:0007669"/>
    <property type="project" value="UniProtKB-UniRule"/>
</dbReference>
<dbReference type="GO" id="GO:0003746">
    <property type="term" value="F:translation elongation factor activity"/>
    <property type="evidence" value="ECO:0007669"/>
    <property type="project" value="UniProtKB-UniRule"/>
</dbReference>
<dbReference type="GO" id="GO:0045727">
    <property type="term" value="P:positive regulation of translation"/>
    <property type="evidence" value="ECO:0007669"/>
    <property type="project" value="UniProtKB-UniRule"/>
</dbReference>
<dbReference type="CDD" id="cd03699">
    <property type="entry name" value="EF4_II"/>
    <property type="match status" value="1"/>
</dbReference>
<dbReference type="CDD" id="cd16260">
    <property type="entry name" value="EF4_III"/>
    <property type="match status" value="1"/>
</dbReference>
<dbReference type="CDD" id="cd01890">
    <property type="entry name" value="LepA"/>
    <property type="match status" value="1"/>
</dbReference>
<dbReference type="CDD" id="cd03709">
    <property type="entry name" value="lepA_C"/>
    <property type="match status" value="1"/>
</dbReference>
<dbReference type="FunFam" id="3.40.50.300:FF:000078">
    <property type="entry name" value="Elongation factor 4"/>
    <property type="match status" value="1"/>
</dbReference>
<dbReference type="FunFam" id="2.40.30.10:FF:000015">
    <property type="entry name" value="Translation factor GUF1, mitochondrial"/>
    <property type="match status" value="1"/>
</dbReference>
<dbReference type="FunFam" id="3.30.70.240:FF:000007">
    <property type="entry name" value="Translation factor GUF1, mitochondrial"/>
    <property type="match status" value="1"/>
</dbReference>
<dbReference type="FunFam" id="3.30.70.2570:FF:000001">
    <property type="entry name" value="Translation factor GUF1, mitochondrial"/>
    <property type="match status" value="1"/>
</dbReference>
<dbReference type="FunFam" id="3.30.70.870:FF:000004">
    <property type="entry name" value="Translation factor GUF1, mitochondrial"/>
    <property type="match status" value="1"/>
</dbReference>
<dbReference type="Gene3D" id="3.30.70.240">
    <property type="match status" value="1"/>
</dbReference>
<dbReference type="Gene3D" id="3.30.70.2570">
    <property type="entry name" value="Elongation factor 4, C-terminal domain"/>
    <property type="match status" value="1"/>
</dbReference>
<dbReference type="Gene3D" id="3.30.70.870">
    <property type="entry name" value="Elongation Factor G (Translational Gtpase), domain 3"/>
    <property type="match status" value="1"/>
</dbReference>
<dbReference type="Gene3D" id="3.40.50.300">
    <property type="entry name" value="P-loop containing nucleotide triphosphate hydrolases"/>
    <property type="match status" value="1"/>
</dbReference>
<dbReference type="Gene3D" id="2.40.30.10">
    <property type="entry name" value="Translation factors"/>
    <property type="match status" value="1"/>
</dbReference>
<dbReference type="HAMAP" id="MF_00071">
    <property type="entry name" value="LepA"/>
    <property type="match status" value="1"/>
</dbReference>
<dbReference type="InterPro" id="IPR006297">
    <property type="entry name" value="EF-4"/>
</dbReference>
<dbReference type="InterPro" id="IPR041095">
    <property type="entry name" value="EFG_II"/>
</dbReference>
<dbReference type="InterPro" id="IPR035647">
    <property type="entry name" value="EFG_III/V"/>
</dbReference>
<dbReference type="InterPro" id="IPR000640">
    <property type="entry name" value="EFG_V-like"/>
</dbReference>
<dbReference type="InterPro" id="IPR004161">
    <property type="entry name" value="EFTu-like_2"/>
</dbReference>
<dbReference type="InterPro" id="IPR031157">
    <property type="entry name" value="G_TR_CS"/>
</dbReference>
<dbReference type="InterPro" id="IPR038363">
    <property type="entry name" value="LepA_C_sf"/>
</dbReference>
<dbReference type="InterPro" id="IPR013842">
    <property type="entry name" value="LepA_CTD"/>
</dbReference>
<dbReference type="InterPro" id="IPR035654">
    <property type="entry name" value="LepA_IV"/>
</dbReference>
<dbReference type="InterPro" id="IPR027417">
    <property type="entry name" value="P-loop_NTPase"/>
</dbReference>
<dbReference type="InterPro" id="IPR005225">
    <property type="entry name" value="Small_GTP-bd"/>
</dbReference>
<dbReference type="InterPro" id="IPR000795">
    <property type="entry name" value="T_Tr_GTP-bd_dom"/>
</dbReference>
<dbReference type="InterPro" id="IPR009000">
    <property type="entry name" value="Transl_B-barrel_sf"/>
</dbReference>
<dbReference type="NCBIfam" id="TIGR01393">
    <property type="entry name" value="lepA"/>
    <property type="match status" value="1"/>
</dbReference>
<dbReference type="NCBIfam" id="TIGR00231">
    <property type="entry name" value="small_GTP"/>
    <property type="match status" value="1"/>
</dbReference>
<dbReference type="PANTHER" id="PTHR43512:SF4">
    <property type="entry name" value="TRANSLATION FACTOR GUF1 HOMOLOG, CHLOROPLASTIC"/>
    <property type="match status" value="1"/>
</dbReference>
<dbReference type="PANTHER" id="PTHR43512">
    <property type="entry name" value="TRANSLATION FACTOR GUF1-RELATED"/>
    <property type="match status" value="1"/>
</dbReference>
<dbReference type="Pfam" id="PF00679">
    <property type="entry name" value="EFG_C"/>
    <property type="match status" value="1"/>
</dbReference>
<dbReference type="Pfam" id="PF14492">
    <property type="entry name" value="EFG_III"/>
    <property type="match status" value="1"/>
</dbReference>
<dbReference type="Pfam" id="PF00009">
    <property type="entry name" value="GTP_EFTU"/>
    <property type="match status" value="1"/>
</dbReference>
<dbReference type="Pfam" id="PF03144">
    <property type="entry name" value="GTP_EFTU_D2"/>
    <property type="match status" value="1"/>
</dbReference>
<dbReference type="Pfam" id="PF06421">
    <property type="entry name" value="LepA_C"/>
    <property type="match status" value="1"/>
</dbReference>
<dbReference type="PRINTS" id="PR00315">
    <property type="entry name" value="ELONGATNFCT"/>
</dbReference>
<dbReference type="SMART" id="SM00838">
    <property type="entry name" value="EFG_C"/>
    <property type="match status" value="1"/>
</dbReference>
<dbReference type="SUPFAM" id="SSF54980">
    <property type="entry name" value="EF-G C-terminal domain-like"/>
    <property type="match status" value="2"/>
</dbReference>
<dbReference type="SUPFAM" id="SSF52540">
    <property type="entry name" value="P-loop containing nucleoside triphosphate hydrolases"/>
    <property type="match status" value="1"/>
</dbReference>
<dbReference type="SUPFAM" id="SSF50447">
    <property type="entry name" value="Translation proteins"/>
    <property type="match status" value="1"/>
</dbReference>
<dbReference type="PROSITE" id="PS00301">
    <property type="entry name" value="G_TR_1"/>
    <property type="match status" value="1"/>
</dbReference>
<dbReference type="PROSITE" id="PS51722">
    <property type="entry name" value="G_TR_2"/>
    <property type="match status" value="1"/>
</dbReference>
<gene>
    <name evidence="1" type="primary">lepA</name>
    <name type="ordered locus">Spy49_0829</name>
</gene>
<reference key="1">
    <citation type="journal article" date="2008" name="J. Bacteriol.">
        <title>Genome sequence of a nephritogenic and highly transformable M49 strain of Streptococcus pyogenes.</title>
        <authorList>
            <person name="McShan W.M."/>
            <person name="Ferretti J.J."/>
            <person name="Karasawa T."/>
            <person name="Suvorov A.N."/>
            <person name="Lin S."/>
            <person name="Qin B."/>
            <person name="Jia H."/>
            <person name="Kenton S."/>
            <person name="Najar F."/>
            <person name="Wu H."/>
            <person name="Scott J."/>
            <person name="Roe B.A."/>
            <person name="Savic D.J."/>
        </authorList>
    </citation>
    <scope>NUCLEOTIDE SEQUENCE [LARGE SCALE GENOMIC DNA]</scope>
    <source>
        <strain>NZ131</strain>
    </source>
</reference>
<organism>
    <name type="scientific">Streptococcus pyogenes serotype M49 (strain NZ131)</name>
    <dbReference type="NCBI Taxonomy" id="471876"/>
    <lineage>
        <taxon>Bacteria</taxon>
        <taxon>Bacillati</taxon>
        <taxon>Bacillota</taxon>
        <taxon>Bacilli</taxon>
        <taxon>Lactobacillales</taxon>
        <taxon>Streptococcaceae</taxon>
        <taxon>Streptococcus</taxon>
    </lineage>
</organism>
<sequence length="610" mass="68253">MNSQDLKKRQEKIRNFSIIAHIDHGKSTLADRILEKTETVSSREMQAQLLDSMDLERERGITIKLNAIELNYTAKDGETYIFHLIDTPGHVDFTYEVSRSLAACEGAILVVDAAQGIEAQTLANVYLALDNDLEILPVINKIDLPAADPERVRHEVEDVIGLDASEAVLASAKAGIGIEEILEQIVEKVPAPTGDVDAPFQALIFDSVYDAYRGVILQVRIVNGIVKPGDKIQMMSNGKTFDVTEVGIFTPKAVGRDFLATGDVGYVAASIKTVADTRVGDTVTLANNPAKEALHGYKQMNPMVFAGIYPIESNKYNDLREALEKLQLNDASLQFEPETSQALGFGFRCGFLGLLHMDVIQERLEREFNIDLIMTAPSVVYHVHTTDEDMIEVSNPSEFPDPTRVAFIEEPYVKAQIMVPQEFVGAVMELSQRRRGDFVTMDYIDDNRVNVIYQIPLAEIVFDFFDKLKSSTRGYASFDYDMSEYRRSQLVKMDILLNGDKVDALSFIVHKEFAYERGKIIVEKLKKIIPRQQFEVPIQAAIGQKIVARSDIKALRKNVLAKCYGGDVSRKRKLLEKQKAGKKRMKAIGSVEVPQEAFLSVLSMDDDTKK</sequence>
<feature type="chain" id="PRO_1000092454" description="Elongation factor 4">
    <location>
        <begin position="1"/>
        <end position="610"/>
    </location>
</feature>
<feature type="domain" description="tr-type G">
    <location>
        <begin position="11"/>
        <end position="193"/>
    </location>
</feature>
<feature type="binding site" evidence="1">
    <location>
        <begin position="23"/>
        <end position="28"/>
    </location>
    <ligand>
        <name>GTP</name>
        <dbReference type="ChEBI" id="CHEBI:37565"/>
    </ligand>
</feature>
<feature type="binding site" evidence="1">
    <location>
        <begin position="140"/>
        <end position="143"/>
    </location>
    <ligand>
        <name>GTP</name>
        <dbReference type="ChEBI" id="CHEBI:37565"/>
    </ligand>
</feature>
<evidence type="ECO:0000255" key="1">
    <source>
        <dbReference type="HAMAP-Rule" id="MF_00071"/>
    </source>
</evidence>